<name>CP52X_CANMA</name>
<dbReference type="EC" id="1.14.14.-"/>
<dbReference type="EMBL" id="X55881">
    <property type="protein sequence ID" value="CAA39366.1"/>
    <property type="molecule type" value="Genomic_DNA"/>
</dbReference>
<dbReference type="PIR" id="A40576">
    <property type="entry name" value="A40576"/>
</dbReference>
<dbReference type="SMR" id="Q12581"/>
<dbReference type="GO" id="GO:0016020">
    <property type="term" value="C:membrane"/>
    <property type="evidence" value="ECO:0007669"/>
    <property type="project" value="UniProtKB-SubCell"/>
</dbReference>
<dbReference type="GO" id="GO:0020037">
    <property type="term" value="F:heme binding"/>
    <property type="evidence" value="ECO:0007669"/>
    <property type="project" value="InterPro"/>
</dbReference>
<dbReference type="GO" id="GO:0005506">
    <property type="term" value="F:iron ion binding"/>
    <property type="evidence" value="ECO:0007669"/>
    <property type="project" value="InterPro"/>
</dbReference>
<dbReference type="GO" id="GO:0016712">
    <property type="term" value="F:oxidoreductase activity, acting on paired donors, with incorporation or reduction of molecular oxygen, reduced flavin or flavoprotein as one donor, and incorporation of one atom of oxygen"/>
    <property type="evidence" value="ECO:0007669"/>
    <property type="project" value="InterPro"/>
</dbReference>
<dbReference type="CDD" id="cd11063">
    <property type="entry name" value="CYP52"/>
    <property type="match status" value="1"/>
</dbReference>
<dbReference type="Gene3D" id="1.10.630.10">
    <property type="entry name" value="Cytochrome P450"/>
    <property type="match status" value="1"/>
</dbReference>
<dbReference type="InterPro" id="IPR001128">
    <property type="entry name" value="Cyt_P450"/>
</dbReference>
<dbReference type="InterPro" id="IPR017972">
    <property type="entry name" value="Cyt_P450_CS"/>
</dbReference>
<dbReference type="InterPro" id="IPR002974">
    <property type="entry name" value="Cyt_P450_E_CYP52_ascomycetes"/>
</dbReference>
<dbReference type="InterPro" id="IPR047146">
    <property type="entry name" value="Cyt_P450_E_CYP52_fungi"/>
</dbReference>
<dbReference type="InterPro" id="IPR002402">
    <property type="entry name" value="Cyt_P450_E_grp-II"/>
</dbReference>
<dbReference type="InterPro" id="IPR036396">
    <property type="entry name" value="Cyt_P450_sf"/>
</dbReference>
<dbReference type="PANTHER" id="PTHR24287">
    <property type="entry name" value="P450, PUTATIVE (EUROFUNG)-RELATED"/>
    <property type="match status" value="1"/>
</dbReference>
<dbReference type="PANTHER" id="PTHR24287:SF1">
    <property type="entry name" value="P450, PUTATIVE (EUROFUNG)-RELATED"/>
    <property type="match status" value="1"/>
</dbReference>
<dbReference type="Pfam" id="PF00067">
    <property type="entry name" value="p450"/>
    <property type="match status" value="1"/>
</dbReference>
<dbReference type="PRINTS" id="PR00464">
    <property type="entry name" value="EP450II"/>
</dbReference>
<dbReference type="PRINTS" id="PR01239">
    <property type="entry name" value="EP450IICYP52"/>
</dbReference>
<dbReference type="PRINTS" id="PR00385">
    <property type="entry name" value="P450"/>
</dbReference>
<dbReference type="SUPFAM" id="SSF48264">
    <property type="entry name" value="Cytochrome P450"/>
    <property type="match status" value="1"/>
</dbReference>
<dbReference type="PROSITE" id="PS00086">
    <property type="entry name" value="CYTOCHROME_P450"/>
    <property type="match status" value="1"/>
</dbReference>
<accession>Q12581</accession>
<reference key="1">
    <citation type="journal article" date="1991" name="DNA Cell Biol.">
        <title>CYP52 (cytochrome P450alk) multigene family in Candida maltosa: molecular cloning and nucleotide sequence of the two tandemly arranged genes.</title>
        <authorList>
            <person name="Ohkuma M."/>
            <person name="Tanimoto T."/>
            <person name="Yano K."/>
            <person name="Takagi M."/>
        </authorList>
    </citation>
    <scope>NUCLEOTIDE SEQUENCE [GENOMIC DNA]</scope>
    <source>
        <strain>ATCC 28140 / CBS 5611 / IAM 12247 / JCM 1504 / NBRC 1977</strain>
    </source>
</reference>
<reference key="2">
    <citation type="journal article" date="1996" name="Biochem. Biophys. Res. Commun.">
        <title>The CYP52 multigene family of Candida maltosa encodes functionally diverse n-alkane-inducible cytochromes P450.</title>
        <authorList>
            <person name="Zimmer T."/>
            <person name="Ohkuma M."/>
            <person name="Ohta A."/>
            <person name="Takagi M."/>
            <person name="Schunck W.H."/>
        </authorList>
    </citation>
    <scope>CHARACTERIZATION</scope>
</reference>
<protein>
    <recommendedName>
        <fullName>Cytochrome P450 52A5</fullName>
        <ecNumber>1.14.14.-</ecNumber>
    </recommendedName>
    <alternativeName>
        <fullName>Alkane-inducible P450-ALK2-A</fullName>
    </alternativeName>
    <alternativeName>
        <fullName>CYPLIIA5</fullName>
    </alternativeName>
</protein>
<sequence length="526" mass="60261">MTSDSTIHELIQSYITKWYVIVPLAIIIYKVFDYFYVLSLRKRLGAAVPTNEETDGYFGFHLPFVLMSKKKDGTIIDFSIERYPELKHPETPTFEFPIFTVKLISTIDPENIKAILATQFSDFSLGTRHAHFAPLIGDGIFTLDGAGWKHSRAMLRPQFAREQVGHVKLLEPHVQVLFKHIRKNKGREFDLQELFFRFTVDSATEFLFGESVESLRDASIGMTSKSKDVDGIEDFTGAFNYSQNYLASRSIMQQFYWILNGKKFRECNAIVHKFADHYVQKALNLTEADLEKQAGYVFLYELVKQTRDPQVLRDQLLNILVAGRDTTAGLLSFVFFELARNPDVVAKLKDEIDTKFGLGEDARIEEITFESLKQCEYLKAVLNECLRLYPSVPQNFRVATKNTTLPRGGGKDGLSPILVRKGQTVMYSVYATHRMESVYGKDATTFRPERWFEPETRKLGWAFVPFNGGPRICLGQQFALTEASYVTVRLLQEFSTLTLDPNLEYPPKKMSHLTMSLFDGTNVQMY</sequence>
<gene>
    <name type="primary">CYP52A5</name>
</gene>
<feature type="chain" id="PRO_0000423538" description="Cytochrome P450 52A5">
    <location>
        <begin position="1"/>
        <end position="526"/>
    </location>
</feature>
<feature type="transmembrane region" description="Helical" evidence="2">
    <location>
        <begin position="18"/>
        <end position="38"/>
    </location>
</feature>
<feature type="binding site" description="axial binding residue" evidence="1">
    <location>
        <position position="473"/>
    </location>
    <ligand>
        <name>heme</name>
        <dbReference type="ChEBI" id="CHEBI:30413"/>
    </ligand>
    <ligandPart>
        <name>Fe</name>
        <dbReference type="ChEBI" id="CHEBI:18248"/>
    </ligandPart>
</feature>
<evidence type="ECO:0000250" key="1"/>
<evidence type="ECO:0000255" key="2"/>
<evidence type="ECO:0000305" key="3"/>
<proteinExistence type="evidence at protein level"/>
<keyword id="KW-0349">Heme</keyword>
<keyword id="KW-0408">Iron</keyword>
<keyword id="KW-0472">Membrane</keyword>
<keyword id="KW-0479">Metal-binding</keyword>
<keyword id="KW-0503">Monooxygenase</keyword>
<keyword id="KW-0560">Oxidoreductase</keyword>
<keyword id="KW-0812">Transmembrane</keyword>
<keyword id="KW-1133">Transmembrane helix</keyword>
<organism>
    <name type="scientific">Candida maltosa</name>
    <name type="common">Yeast</name>
    <dbReference type="NCBI Taxonomy" id="5479"/>
    <lineage>
        <taxon>Eukaryota</taxon>
        <taxon>Fungi</taxon>
        <taxon>Dikarya</taxon>
        <taxon>Ascomycota</taxon>
        <taxon>Saccharomycotina</taxon>
        <taxon>Pichiomycetes</taxon>
        <taxon>Debaryomycetaceae</taxon>
        <taxon>Candida/Lodderomyces clade</taxon>
        <taxon>Candida</taxon>
    </lineage>
</organism>
<comment type="function">
    <text>Together with an NADPH cytochrome P450 the enzyme system catalyzes the terminal hydroxylation as the first step in the assimilation of alkanes and fatty acids.</text>
</comment>
<comment type="cofactor">
    <cofactor evidence="1">
        <name>heme</name>
        <dbReference type="ChEBI" id="CHEBI:30413"/>
    </cofactor>
</comment>
<comment type="subcellular location">
    <subcellularLocation>
        <location evidence="3">Membrane</location>
    </subcellularLocation>
</comment>
<comment type="induction">
    <text>By N-alkanes.</text>
</comment>
<comment type="similarity">
    <text evidence="3">Belongs to the cytochrome P450 family.</text>
</comment>